<comment type="function">
    <text evidence="1">Catalyzes the ATP-dependent phosphorylation of N-acetyl-L-glutamate.</text>
</comment>
<comment type="catalytic activity">
    <reaction evidence="1">
        <text>N-acetyl-L-glutamate + ATP = N-acetyl-L-glutamyl 5-phosphate + ADP</text>
        <dbReference type="Rhea" id="RHEA:14629"/>
        <dbReference type="ChEBI" id="CHEBI:30616"/>
        <dbReference type="ChEBI" id="CHEBI:44337"/>
        <dbReference type="ChEBI" id="CHEBI:57936"/>
        <dbReference type="ChEBI" id="CHEBI:456216"/>
        <dbReference type="EC" id="2.7.2.8"/>
    </reaction>
</comment>
<comment type="pathway">
    <text evidence="1">Amino-acid biosynthesis; L-arginine biosynthesis; N(2)-acetyl-L-ornithine from L-glutamate: step 2/4.</text>
</comment>
<comment type="subcellular location">
    <subcellularLocation>
        <location evidence="1">Cytoplasm</location>
    </subcellularLocation>
</comment>
<comment type="similarity">
    <text evidence="1">Belongs to the acetylglutamate kinase family. ArgB subfamily.</text>
</comment>
<evidence type="ECO:0000255" key="1">
    <source>
        <dbReference type="HAMAP-Rule" id="MF_00082"/>
    </source>
</evidence>
<gene>
    <name evidence="1" type="primary">argB</name>
    <name type="ordered locus">Rsph17029_2729</name>
</gene>
<dbReference type="EC" id="2.7.2.8" evidence="1"/>
<dbReference type="EMBL" id="CP000577">
    <property type="protein sequence ID" value="ABN77831.1"/>
    <property type="molecule type" value="Genomic_DNA"/>
</dbReference>
<dbReference type="RefSeq" id="WP_002721433.1">
    <property type="nucleotide sequence ID" value="NC_009049.1"/>
</dbReference>
<dbReference type="SMR" id="A3PNB5"/>
<dbReference type="GeneID" id="67447842"/>
<dbReference type="KEGG" id="rsh:Rsph17029_2729"/>
<dbReference type="HOGENOM" id="CLU_053680_0_0_5"/>
<dbReference type="UniPathway" id="UPA00068">
    <property type="reaction ID" value="UER00107"/>
</dbReference>
<dbReference type="GO" id="GO:0005737">
    <property type="term" value="C:cytoplasm"/>
    <property type="evidence" value="ECO:0007669"/>
    <property type="project" value="UniProtKB-SubCell"/>
</dbReference>
<dbReference type="GO" id="GO:0003991">
    <property type="term" value="F:acetylglutamate kinase activity"/>
    <property type="evidence" value="ECO:0007669"/>
    <property type="project" value="UniProtKB-UniRule"/>
</dbReference>
<dbReference type="GO" id="GO:0005524">
    <property type="term" value="F:ATP binding"/>
    <property type="evidence" value="ECO:0007669"/>
    <property type="project" value="UniProtKB-UniRule"/>
</dbReference>
<dbReference type="GO" id="GO:0042450">
    <property type="term" value="P:arginine biosynthetic process via ornithine"/>
    <property type="evidence" value="ECO:0007669"/>
    <property type="project" value="UniProtKB-UniRule"/>
</dbReference>
<dbReference type="GO" id="GO:0006526">
    <property type="term" value="P:L-arginine biosynthetic process"/>
    <property type="evidence" value="ECO:0007669"/>
    <property type="project" value="UniProtKB-UniPathway"/>
</dbReference>
<dbReference type="CDD" id="cd04250">
    <property type="entry name" value="AAK_NAGK-C"/>
    <property type="match status" value="1"/>
</dbReference>
<dbReference type="FunFam" id="3.40.1160.10:FF:000004">
    <property type="entry name" value="Acetylglutamate kinase"/>
    <property type="match status" value="1"/>
</dbReference>
<dbReference type="Gene3D" id="3.40.1160.10">
    <property type="entry name" value="Acetylglutamate kinase-like"/>
    <property type="match status" value="1"/>
</dbReference>
<dbReference type="HAMAP" id="MF_00082">
    <property type="entry name" value="ArgB"/>
    <property type="match status" value="1"/>
</dbReference>
<dbReference type="InterPro" id="IPR036393">
    <property type="entry name" value="AceGlu_kinase-like_sf"/>
</dbReference>
<dbReference type="InterPro" id="IPR004662">
    <property type="entry name" value="AcgluKinase_fam"/>
</dbReference>
<dbReference type="InterPro" id="IPR037528">
    <property type="entry name" value="ArgB"/>
</dbReference>
<dbReference type="InterPro" id="IPR001048">
    <property type="entry name" value="Asp/Glu/Uridylate_kinase"/>
</dbReference>
<dbReference type="InterPro" id="IPR001057">
    <property type="entry name" value="Glu/AcGlu_kinase"/>
</dbReference>
<dbReference type="InterPro" id="IPR041727">
    <property type="entry name" value="NAGK-C"/>
</dbReference>
<dbReference type="NCBIfam" id="TIGR00761">
    <property type="entry name" value="argB"/>
    <property type="match status" value="1"/>
</dbReference>
<dbReference type="PANTHER" id="PTHR23342">
    <property type="entry name" value="N-ACETYLGLUTAMATE SYNTHASE"/>
    <property type="match status" value="1"/>
</dbReference>
<dbReference type="PANTHER" id="PTHR23342:SF0">
    <property type="entry name" value="N-ACETYLGLUTAMATE SYNTHASE, MITOCHONDRIAL"/>
    <property type="match status" value="1"/>
</dbReference>
<dbReference type="Pfam" id="PF00696">
    <property type="entry name" value="AA_kinase"/>
    <property type="match status" value="1"/>
</dbReference>
<dbReference type="PIRSF" id="PIRSF000728">
    <property type="entry name" value="NAGK"/>
    <property type="match status" value="1"/>
</dbReference>
<dbReference type="PRINTS" id="PR00474">
    <property type="entry name" value="GLU5KINASE"/>
</dbReference>
<dbReference type="SUPFAM" id="SSF53633">
    <property type="entry name" value="Carbamate kinase-like"/>
    <property type="match status" value="1"/>
</dbReference>
<accession>A3PNB5</accession>
<feature type="chain" id="PRO_1000010537" description="Acetylglutamate kinase">
    <location>
        <begin position="1"/>
        <end position="293"/>
    </location>
</feature>
<feature type="binding site" evidence="1">
    <location>
        <begin position="65"/>
        <end position="66"/>
    </location>
    <ligand>
        <name>substrate</name>
    </ligand>
</feature>
<feature type="binding site" evidence="1">
    <location>
        <position position="87"/>
    </location>
    <ligand>
        <name>substrate</name>
    </ligand>
</feature>
<feature type="binding site" evidence="1">
    <location>
        <position position="180"/>
    </location>
    <ligand>
        <name>substrate</name>
    </ligand>
</feature>
<feature type="site" description="Transition state stabilizer" evidence="1">
    <location>
        <position position="30"/>
    </location>
</feature>
<feature type="site" description="Transition state stabilizer" evidence="1">
    <location>
        <position position="240"/>
    </location>
</feature>
<sequence>MTRDPIATARTLSEALPYLQRYAGAVVVVKFGGNAMGDEAAMAEFARDIVLMRQVGVNPVVVHGGGPMINELLGKLGIKSEFVRGKRVTDKATVEVVEMVLSGLVNKRIVQAINDQGGRAVGISGKDDDLMVCVADDPDLGFVGKPVEMNVQVLRDLYNAGIIPVVAPVATGMADNETFNVNGDTAAGAIAGALQADRLLLLTDVAGVKDASGEVLSQLTPSQVREMVASGTISGGMIPKTETALAALDEGVRAVVILDGRTPNACLIEIFTDEGAGTIIRSTEPRVKPRVRR</sequence>
<organism>
    <name type="scientific">Cereibacter sphaeroides (strain ATCC 17029 / ATH 2.4.9)</name>
    <name type="common">Rhodobacter sphaeroides</name>
    <dbReference type="NCBI Taxonomy" id="349101"/>
    <lineage>
        <taxon>Bacteria</taxon>
        <taxon>Pseudomonadati</taxon>
        <taxon>Pseudomonadota</taxon>
        <taxon>Alphaproteobacteria</taxon>
        <taxon>Rhodobacterales</taxon>
        <taxon>Paracoccaceae</taxon>
        <taxon>Cereibacter</taxon>
    </lineage>
</organism>
<keyword id="KW-0028">Amino-acid biosynthesis</keyword>
<keyword id="KW-0055">Arginine biosynthesis</keyword>
<keyword id="KW-0067">ATP-binding</keyword>
<keyword id="KW-0963">Cytoplasm</keyword>
<keyword id="KW-0418">Kinase</keyword>
<keyword id="KW-0547">Nucleotide-binding</keyword>
<keyword id="KW-0808">Transferase</keyword>
<proteinExistence type="inferred from homology"/>
<protein>
    <recommendedName>
        <fullName evidence="1">Acetylglutamate kinase</fullName>
        <ecNumber evidence="1">2.7.2.8</ecNumber>
    </recommendedName>
    <alternativeName>
        <fullName evidence="1">N-acetyl-L-glutamate 5-phosphotransferase</fullName>
    </alternativeName>
    <alternativeName>
        <fullName evidence="1">NAG kinase</fullName>
        <shortName evidence="1">NAGK</shortName>
    </alternativeName>
</protein>
<name>ARGB_CERS1</name>
<reference key="1">
    <citation type="submission" date="2007-02" db="EMBL/GenBank/DDBJ databases">
        <title>Complete sequence of chromosome 1 of Rhodobacter sphaeroides ATCC 17029.</title>
        <authorList>
            <person name="Copeland A."/>
            <person name="Lucas S."/>
            <person name="Lapidus A."/>
            <person name="Barry K."/>
            <person name="Detter J.C."/>
            <person name="Glavina del Rio T."/>
            <person name="Hammon N."/>
            <person name="Israni S."/>
            <person name="Dalin E."/>
            <person name="Tice H."/>
            <person name="Pitluck S."/>
            <person name="Kiss H."/>
            <person name="Brettin T."/>
            <person name="Bruce D."/>
            <person name="Han C."/>
            <person name="Tapia R."/>
            <person name="Gilna P."/>
            <person name="Schmutz J."/>
            <person name="Larimer F."/>
            <person name="Land M."/>
            <person name="Hauser L."/>
            <person name="Kyrpides N."/>
            <person name="Mikhailova N."/>
            <person name="Richardson P."/>
            <person name="Mackenzie C."/>
            <person name="Choudhary M."/>
            <person name="Donohue T.J."/>
            <person name="Kaplan S."/>
        </authorList>
    </citation>
    <scope>NUCLEOTIDE SEQUENCE [LARGE SCALE GENOMIC DNA]</scope>
    <source>
        <strain>ATCC 17029 / ATH 2.4.9</strain>
    </source>
</reference>